<name>TRIP1_TRIIF</name>
<reference evidence="10" key="1">
    <citation type="journal article" date="2006" name="FEBS J.">
        <title>Identification and characterization of a collagen-induced platelet aggregation inhibitor, triplatin, from salivary glands of the assassin bug, Triatoma infestans.</title>
        <authorList>
            <person name="Morita A."/>
            <person name="Isawa H."/>
            <person name="Orito Y."/>
            <person name="Iwanaga S."/>
            <person name="Chinzei Y."/>
            <person name="Yuda M."/>
        </authorList>
    </citation>
    <scope>NUCLEOTIDE SEQUENCE [MRNA]</scope>
    <scope>SUBCELLULAR LOCATION</scope>
    <scope>TISSUE SPECIFICITY</scope>
    <scope>RECOMBINANT EXPRESSION</scope>
    <source>
        <tissue>Salivary gland</tissue>
    </source>
</reference>
<reference key="2">
    <citation type="journal article" date="2012" name="Thromb. Haemost.">
        <title>Triplatin, a platelet aggregation inhibitor from the salivary gland of the triatomine vector of Chagas disease, binds to TXA(2) but does not interact with glycoprotein PVI.</title>
        <authorList>
            <person name="Ma D."/>
            <person name="Assumpcao T.C."/>
            <person name="Li Y."/>
            <person name="Andersen J.F."/>
            <person name="Ribeiro J."/>
            <person name="Francischetti I.M."/>
        </authorList>
    </citation>
    <scope>FUNCTION</scope>
    <scope>RECOMBINANT EXPRESSION</scope>
</reference>
<reference key="3">
    <citation type="journal article" date="2015" name="PLoS Negl. Trop. Dis.">
        <title>Salivary thromboxane A2-binding proteins from triatomine vectors of Chagas disease inhibit platelet-mediated neutrophil extracellular traps (NETs) formation and arterial thrombosis.</title>
        <authorList>
            <person name="Mizurini D.M."/>
            <person name="Aslan J.S."/>
            <person name="Gomes T."/>
            <person name="Ma D."/>
            <person name="Francischetti I.M."/>
            <person name="Monteiro R.Q."/>
        </authorList>
    </citation>
    <scope>FUNCTION</scope>
    <scope>RECOMBINANT EXPRESSION</scope>
</reference>
<organism>
    <name type="scientific">Triatoma infestans</name>
    <name type="common">Assassin bug</name>
    <dbReference type="NCBI Taxonomy" id="30076"/>
    <lineage>
        <taxon>Eukaryota</taxon>
        <taxon>Metazoa</taxon>
        <taxon>Ecdysozoa</taxon>
        <taxon>Arthropoda</taxon>
        <taxon>Hexapoda</taxon>
        <taxon>Insecta</taxon>
        <taxon>Pterygota</taxon>
        <taxon>Neoptera</taxon>
        <taxon>Paraneoptera</taxon>
        <taxon>Hemiptera</taxon>
        <taxon>Heteroptera</taxon>
        <taxon>Panheteroptera</taxon>
        <taxon>Cimicomorpha</taxon>
        <taxon>Reduviidae</taxon>
        <taxon>Triatominae</taxon>
        <taxon>Triatoma</taxon>
    </lineage>
</organism>
<proteinExistence type="evidence at transcript level"/>
<dbReference type="EMBL" id="AB250209">
    <property type="protein sequence ID" value="BAE96121.1"/>
    <property type="molecule type" value="mRNA"/>
</dbReference>
<dbReference type="SMR" id="Q18NS7"/>
<dbReference type="GO" id="GO:0005576">
    <property type="term" value="C:extracellular region"/>
    <property type="evidence" value="ECO:0007669"/>
    <property type="project" value="UniProtKB-SubCell"/>
</dbReference>
<dbReference type="GO" id="GO:0090729">
    <property type="term" value="F:toxin activity"/>
    <property type="evidence" value="ECO:0007669"/>
    <property type="project" value="UniProtKB-KW"/>
</dbReference>
<dbReference type="GO" id="GO:0030682">
    <property type="term" value="P:symbiont-mediated perturbation of host defenses"/>
    <property type="evidence" value="ECO:0007669"/>
    <property type="project" value="InterPro"/>
</dbReference>
<dbReference type="CDD" id="cd19423">
    <property type="entry name" value="lipocalin_LTBP1-like"/>
    <property type="match status" value="1"/>
</dbReference>
<dbReference type="Gene3D" id="2.40.128.20">
    <property type="match status" value="1"/>
</dbReference>
<dbReference type="InterPro" id="IPR012674">
    <property type="entry name" value="Calycin"/>
</dbReference>
<dbReference type="InterPro" id="IPR005657">
    <property type="entry name" value="Triabi/Procalin"/>
</dbReference>
<dbReference type="Pfam" id="PF03973">
    <property type="entry name" value="Triabin"/>
    <property type="match status" value="1"/>
</dbReference>
<dbReference type="SUPFAM" id="SSF50814">
    <property type="entry name" value="Lipocalins"/>
    <property type="match status" value="1"/>
</dbReference>
<accession>Q18NS7</accession>
<comment type="function">
    <text evidence="3 4 5">Inhibits platelet aggregation and vasoconstriction through binding to distinct eicosanoids involved in inflammation (acts as a scavenger), and has a role in inhibiting host innate immunity by impairing platelet-assisted formation of neutrophil extracellular traps (NETs) (PubMed:22159626, PubMed:26110417). Inhibits platelet aggregation by collagen, and low doses of thromboxane A2 mimetic (TXA2 mimetic), and arachidonic acid (AA) without affecting aggregation induced by ADP, convulxin (GP6 agonist), and PMA (PubMed:16759235, PubMed:22159626, PubMed:26110417). Binds to TXA2, TXB2, prostaglandine H2 mimetic (PGH2 mimetic), PGJ2, and PGF2alpha (PubMed:22159626). Binding is not observed to leukotrienes, AA, and biogenic amines (PGE1, 5(S)-HETE, 12(S)-HETE, 20-HETE, norepinephrine, epinephrine, serotonin, LTC4 and ADP) (PubMed:22159626). Induces relaxation of aorta rat previously contracted with TXA2 mimetic (PubMed:22159626). Moreover, it also impairs platelet-assisted formation of neutrophil extracellular traps (NETs) (PubMed:26110417). NETs are web-like structures of DNA and proteins that play an important role in killing of pathogens (PubMed:26110417). In addition, NETs are implicated in thrombus formation (PubMed:26110417). In vivo, this protein exhibits antithrombotic activity in two distinct mice models that are highly dependent on platelets (PubMed:26110417). It is noteworthy that it inhibits thrombosis without promoting excessive bleeding (PubMed:26110417).</text>
</comment>
<comment type="subcellular location">
    <subcellularLocation>
        <location evidence="3">Secreted</location>
    </subcellularLocation>
</comment>
<comment type="tissue specificity">
    <text evidence="3">Expressed in salivary glands.</text>
</comment>
<comment type="similarity">
    <text evidence="9">Belongs to the calycin superfamily. Triabin family.</text>
</comment>
<comment type="caution">
    <text evidence="4">Morita et al. (2006) suggested that this protein inhibits collagen-induce platelet aggregation by binding to platelet glycoprotein VI, but a surface plasmon resonance experiment failed to demonstrate an interaction between these two proteins.</text>
</comment>
<feature type="signal peptide" evidence="2">
    <location>
        <begin position="1"/>
        <end position="18"/>
    </location>
</feature>
<feature type="chain" id="PRO_5004187176" description="Triplatin">
    <location>
        <begin position="19"/>
        <end position="182"/>
    </location>
</feature>
<feature type="disulfide bond" evidence="1">
    <location>
        <begin position="21"/>
        <end position="133"/>
    </location>
</feature>
<feature type="disulfide bond" evidence="1">
    <location>
        <begin position="55"/>
        <end position="177"/>
    </location>
</feature>
<feature type="disulfide bond" evidence="1">
    <location>
        <begin position="88"/>
        <end position="105"/>
    </location>
</feature>
<protein>
    <recommendedName>
        <fullName evidence="7 8">Triplatin</fullName>
    </recommendedName>
    <alternativeName>
        <fullName evidence="6">Platelet inhibitor triplatin-1</fullName>
        <shortName evidence="10">Tripla-1</shortName>
    </alternativeName>
</protein>
<sequence>MKMIIAVTFLGIVTIAFAEECRLMQPAANFDAATYFSIPHVYVTHSKNEPKTDVCREYDTSKTDGGSTTVITSNYKIKGQAVNNKVTCTSTGLKNGQTGQFSVVCQPPTGAAVTLTTSVLATDNQNYAILQRCPTSGQGNILVLQTAKEGVNPGVKDFFQKKGWNIDSWFSRTNVNCENIQS</sequence>
<keyword id="KW-1015">Disulfide bond</keyword>
<keyword id="KW-1199">Hemostasis impairing toxin</keyword>
<keyword id="KW-1201">Platelet aggregation inhibiting toxin</keyword>
<keyword id="KW-0964">Secreted</keyword>
<keyword id="KW-0732">Signal</keyword>
<keyword id="KW-0800">Toxin</keyword>
<evidence type="ECO:0000250" key="1">
    <source>
        <dbReference type="UniProtKB" id="Q27049"/>
    </source>
</evidence>
<evidence type="ECO:0000255" key="2"/>
<evidence type="ECO:0000269" key="3">
    <source>
    </source>
</evidence>
<evidence type="ECO:0000269" key="4">
    <source>
    </source>
</evidence>
<evidence type="ECO:0000269" key="5">
    <source>
    </source>
</evidence>
<evidence type="ECO:0000303" key="6">
    <source>
    </source>
</evidence>
<evidence type="ECO:0000303" key="7">
    <source>
    </source>
</evidence>
<evidence type="ECO:0000303" key="8">
    <source>
    </source>
</evidence>
<evidence type="ECO:0000305" key="9"/>
<evidence type="ECO:0000312" key="10">
    <source>
        <dbReference type="EMBL" id="BAE96121.1"/>
    </source>
</evidence>